<gene>
    <name evidence="1" type="primary">rny</name>
    <name type="ordered locus">BCE_3813</name>
</gene>
<feature type="chain" id="PRO_0000344814" description="Ribonuclease Y">
    <location>
        <begin position="1"/>
        <end position="520"/>
    </location>
</feature>
<feature type="transmembrane region" description="Helical" evidence="1">
    <location>
        <begin position="4"/>
        <end position="24"/>
    </location>
</feature>
<feature type="domain" description="KH" evidence="1">
    <location>
        <begin position="210"/>
        <end position="273"/>
    </location>
</feature>
<feature type="domain" description="HD" evidence="2">
    <location>
        <begin position="336"/>
        <end position="429"/>
    </location>
</feature>
<feature type="region of interest" description="Disordered" evidence="3">
    <location>
        <begin position="86"/>
        <end position="116"/>
    </location>
</feature>
<name>RNY_BACC1</name>
<sequence length="520" mass="58618">MSSTVWILISILLATVGAVVGFFVRKSIAEAKINGAANEAKRILDEANREAEALKKEALLEAKDEIHTLRTEAELEIRDRRSELQKQENRLMQKEENLDRKDETLDKREQQLEKKEDSLVARQQQIEELESKVGELVQKQQTELERISNLTREQAKAIILGKVESEVSHEIAVMVKESEVRAKEEADKKAKEILSLAMQRCAADHVAETTVSVVNLPNDEMKGRIIGREGRNIRTLETLTGIDLIIDDTPEAVILSGFDPIRRETARIALDKLVQDGRIHPARIEEMVEKSRREVDEYIREVGEQTTFEVGVHGLHPDLIKILGRLKYRTSYGQNVLKHSMEVAYLTGLMAAELGEDEKLARRAGLLHDIGKAIDHEVEGSHVEIGVELATKYKEHPVVINSIASHHGDTEPTSIIAVLVAAADALSAARPGARSETLENYIRRLEKLEEISESYEGVEKSFAIQAGREVRILVKPDTIDDLEAHRLARDIRKRIENELDYPGHIKVTVIRETRAVEYAK</sequence>
<keyword id="KW-1003">Cell membrane</keyword>
<keyword id="KW-0255">Endonuclease</keyword>
<keyword id="KW-0378">Hydrolase</keyword>
<keyword id="KW-0472">Membrane</keyword>
<keyword id="KW-0540">Nuclease</keyword>
<keyword id="KW-0694">RNA-binding</keyword>
<keyword id="KW-0812">Transmembrane</keyword>
<keyword id="KW-1133">Transmembrane helix</keyword>
<accession>Q732U7</accession>
<reference key="1">
    <citation type="journal article" date="2004" name="Nucleic Acids Res.">
        <title>The genome sequence of Bacillus cereus ATCC 10987 reveals metabolic adaptations and a large plasmid related to Bacillus anthracis pXO1.</title>
        <authorList>
            <person name="Rasko D.A."/>
            <person name="Ravel J."/>
            <person name="Oekstad O.A."/>
            <person name="Helgason E."/>
            <person name="Cer R.Z."/>
            <person name="Jiang L."/>
            <person name="Shores K.A."/>
            <person name="Fouts D.E."/>
            <person name="Tourasse N.J."/>
            <person name="Angiuoli S.V."/>
            <person name="Kolonay J.F."/>
            <person name="Nelson W.C."/>
            <person name="Kolstoe A.-B."/>
            <person name="Fraser C.M."/>
            <person name="Read T.D."/>
        </authorList>
    </citation>
    <scope>NUCLEOTIDE SEQUENCE [LARGE SCALE GENOMIC DNA]</scope>
    <source>
        <strain>ATCC 10987 / NRS 248</strain>
    </source>
</reference>
<proteinExistence type="inferred from homology"/>
<dbReference type="EC" id="3.1.-.-" evidence="1"/>
<dbReference type="EMBL" id="AE017194">
    <property type="protein sequence ID" value="AAS42718.1"/>
    <property type="molecule type" value="Genomic_DNA"/>
</dbReference>
<dbReference type="SMR" id="Q732U7"/>
<dbReference type="KEGG" id="bca:BCE_3813"/>
<dbReference type="HOGENOM" id="CLU_028328_1_0_9"/>
<dbReference type="Proteomes" id="UP000002527">
    <property type="component" value="Chromosome"/>
</dbReference>
<dbReference type="GO" id="GO:0005886">
    <property type="term" value="C:plasma membrane"/>
    <property type="evidence" value="ECO:0007669"/>
    <property type="project" value="UniProtKB-SubCell"/>
</dbReference>
<dbReference type="GO" id="GO:0003723">
    <property type="term" value="F:RNA binding"/>
    <property type="evidence" value="ECO:0007669"/>
    <property type="project" value="UniProtKB-UniRule"/>
</dbReference>
<dbReference type="GO" id="GO:0004521">
    <property type="term" value="F:RNA endonuclease activity"/>
    <property type="evidence" value="ECO:0007669"/>
    <property type="project" value="UniProtKB-UniRule"/>
</dbReference>
<dbReference type="GO" id="GO:0006402">
    <property type="term" value="P:mRNA catabolic process"/>
    <property type="evidence" value="ECO:0007669"/>
    <property type="project" value="UniProtKB-UniRule"/>
</dbReference>
<dbReference type="CDD" id="cd00077">
    <property type="entry name" value="HDc"/>
    <property type="match status" value="1"/>
</dbReference>
<dbReference type="CDD" id="cd22431">
    <property type="entry name" value="KH-I_RNaseY"/>
    <property type="match status" value="1"/>
</dbReference>
<dbReference type="FunFam" id="1.10.3210.10:FF:000003">
    <property type="entry name" value="Ribonuclease Y"/>
    <property type="match status" value="1"/>
</dbReference>
<dbReference type="FunFam" id="3.30.1370.10:FF:000006">
    <property type="entry name" value="Ribonuclease Y"/>
    <property type="match status" value="1"/>
</dbReference>
<dbReference type="Gene3D" id="1.10.3210.10">
    <property type="entry name" value="Hypothetical protein af1432"/>
    <property type="match status" value="1"/>
</dbReference>
<dbReference type="Gene3D" id="3.30.1370.10">
    <property type="entry name" value="K Homology domain, type 1"/>
    <property type="match status" value="1"/>
</dbReference>
<dbReference type="HAMAP" id="MF_00335">
    <property type="entry name" value="RNase_Y"/>
    <property type="match status" value="1"/>
</dbReference>
<dbReference type="InterPro" id="IPR003607">
    <property type="entry name" value="HD/PDEase_dom"/>
</dbReference>
<dbReference type="InterPro" id="IPR006674">
    <property type="entry name" value="HD_domain"/>
</dbReference>
<dbReference type="InterPro" id="IPR006675">
    <property type="entry name" value="HDIG_dom"/>
</dbReference>
<dbReference type="InterPro" id="IPR004087">
    <property type="entry name" value="KH_dom"/>
</dbReference>
<dbReference type="InterPro" id="IPR004088">
    <property type="entry name" value="KH_dom_type_1"/>
</dbReference>
<dbReference type="InterPro" id="IPR036612">
    <property type="entry name" value="KH_dom_type_1_sf"/>
</dbReference>
<dbReference type="InterPro" id="IPR017705">
    <property type="entry name" value="Ribonuclease_Y"/>
</dbReference>
<dbReference type="InterPro" id="IPR022711">
    <property type="entry name" value="RNase_Y_N"/>
</dbReference>
<dbReference type="NCBIfam" id="TIGR00277">
    <property type="entry name" value="HDIG"/>
    <property type="match status" value="1"/>
</dbReference>
<dbReference type="NCBIfam" id="TIGR03319">
    <property type="entry name" value="RNase_Y"/>
    <property type="match status" value="1"/>
</dbReference>
<dbReference type="PANTHER" id="PTHR12826">
    <property type="entry name" value="RIBONUCLEASE Y"/>
    <property type="match status" value="1"/>
</dbReference>
<dbReference type="PANTHER" id="PTHR12826:SF15">
    <property type="entry name" value="RIBONUCLEASE Y"/>
    <property type="match status" value="1"/>
</dbReference>
<dbReference type="Pfam" id="PF01966">
    <property type="entry name" value="HD"/>
    <property type="match status" value="1"/>
</dbReference>
<dbReference type="Pfam" id="PF00013">
    <property type="entry name" value="KH_1"/>
    <property type="match status" value="1"/>
</dbReference>
<dbReference type="Pfam" id="PF12072">
    <property type="entry name" value="RNase_Y_N"/>
    <property type="match status" value="1"/>
</dbReference>
<dbReference type="SMART" id="SM00471">
    <property type="entry name" value="HDc"/>
    <property type="match status" value="1"/>
</dbReference>
<dbReference type="SMART" id="SM00322">
    <property type="entry name" value="KH"/>
    <property type="match status" value="1"/>
</dbReference>
<dbReference type="SUPFAM" id="SSF54791">
    <property type="entry name" value="Eukaryotic type KH-domain (KH-domain type I)"/>
    <property type="match status" value="1"/>
</dbReference>
<dbReference type="SUPFAM" id="SSF109604">
    <property type="entry name" value="HD-domain/PDEase-like"/>
    <property type="match status" value="1"/>
</dbReference>
<dbReference type="PROSITE" id="PS51831">
    <property type="entry name" value="HD"/>
    <property type="match status" value="1"/>
</dbReference>
<dbReference type="PROSITE" id="PS50084">
    <property type="entry name" value="KH_TYPE_1"/>
    <property type="match status" value="1"/>
</dbReference>
<evidence type="ECO:0000255" key="1">
    <source>
        <dbReference type="HAMAP-Rule" id="MF_00335"/>
    </source>
</evidence>
<evidence type="ECO:0000255" key="2">
    <source>
        <dbReference type="PROSITE-ProRule" id="PRU01175"/>
    </source>
</evidence>
<evidence type="ECO:0000256" key="3">
    <source>
        <dbReference type="SAM" id="MobiDB-lite"/>
    </source>
</evidence>
<comment type="function">
    <text evidence="1">Endoribonuclease that initiates mRNA decay.</text>
</comment>
<comment type="subcellular location">
    <subcellularLocation>
        <location evidence="1">Cell membrane</location>
        <topology evidence="1">Single-pass membrane protein</topology>
    </subcellularLocation>
</comment>
<comment type="similarity">
    <text evidence="1">Belongs to the RNase Y family.</text>
</comment>
<protein>
    <recommendedName>
        <fullName evidence="1">Ribonuclease Y</fullName>
        <shortName evidence="1">RNase Y</shortName>
        <ecNumber evidence="1">3.1.-.-</ecNumber>
    </recommendedName>
</protein>
<organism>
    <name type="scientific">Bacillus cereus (strain ATCC 10987 / NRS 248)</name>
    <dbReference type="NCBI Taxonomy" id="222523"/>
    <lineage>
        <taxon>Bacteria</taxon>
        <taxon>Bacillati</taxon>
        <taxon>Bacillota</taxon>
        <taxon>Bacilli</taxon>
        <taxon>Bacillales</taxon>
        <taxon>Bacillaceae</taxon>
        <taxon>Bacillus</taxon>
        <taxon>Bacillus cereus group</taxon>
    </lineage>
</organism>